<dbReference type="EMBL" id="L46835">
    <property type="protein sequence ID" value="AAA74675.1"/>
    <property type="molecule type" value="Genomic_DNA"/>
</dbReference>
<dbReference type="InterPro" id="IPR008765">
    <property type="entry name" value="Phage_T4_Frd3"/>
</dbReference>
<dbReference type="Pfam" id="PF05798">
    <property type="entry name" value="Phage_FRD3"/>
    <property type="match status" value="1"/>
</dbReference>
<accession>Q76VH0</accession>
<protein>
    <recommendedName>
        <fullName>Uncharacterized 8.8 kDa protein in frd-Gp32 intergenic region</fullName>
    </recommendedName>
</protein>
<name>Y14E_BPLZ3</name>
<gene>
    <name type="primary">frd.3</name>
    <name type="synonym">frd3</name>
</gene>
<feature type="chain" id="PRO_0000165196" description="Uncharacterized 8.8 kDa protein in frd-Gp32 intergenic region">
    <location>
        <begin position="1"/>
        <end position="76"/>
    </location>
</feature>
<organism>
    <name type="scientific">Enterobacteria phage LZ3</name>
    <name type="common">Bacteriophage LZ3</name>
    <dbReference type="NCBI Taxonomy" id="37362"/>
    <lineage>
        <taxon>Viruses</taxon>
        <taxon>Duplodnaviria</taxon>
        <taxon>Heunggongvirae</taxon>
        <taxon>Uroviricota</taxon>
        <taxon>Caudoviricetes</taxon>
        <taxon>Straboviridae</taxon>
        <taxon>Tevenvirinae</taxon>
        <taxon>Tequatrovirus</taxon>
    </lineage>
</organism>
<reference key="1">
    <citation type="submission" date="1995-08" db="EMBL/GenBank/DDBJ databases">
        <title>DNA sequences of the frd region in T4-related bacteriophages.</title>
        <authorList>
            <person name="Poglazov A.B."/>
            <person name="Porter D."/>
            <person name="Kutter E.M."/>
            <person name="Mesyanzhinov V.V."/>
        </authorList>
    </citation>
    <scope>NUCLEOTIDE SEQUENCE [GENOMIC DNA]</scope>
</reference>
<sequence>MAKVDIDIVDFEYIEEIIRNRYPELSITSIHDDPNYCNXXIVIEGPLEDLTRFMANEYCDGMDSEDAEFYMGLIEQ</sequence>
<proteinExistence type="predicted"/>
<organismHost>
    <name type="scientific">Escherichia coli</name>
    <dbReference type="NCBI Taxonomy" id="562"/>
</organismHost>